<name>PYRD_ECO7I</name>
<sequence>MYYPFVRKALFQLDPERAHEFTFQQLRRITGTPFEALVRQKVPAKPVNCMGLTFKNPLGLAAGLDKDGECIDALGAMGFGSIEIGTVTPRPQPGNDKPRLFRLVDAEGLINRMGFNNLGVDNLVENVKKAHYDGVLGINIGKNKDTPVEQGKDDYLICMEKIYAYAGYIAINISSPNTPGLRTLQYGEALDDLLTAIKNKQNDLQAMHHKYVPIAVKIAPDLSEEELIQVADSLVRHNIDGVIATNTTLDRSLVQGMKNCDQTGGLSGRPLQLKSTEIIRRLSQELNGRLPIIGVGGIDSVIAAREKIAAGASLVQIYSGFIFKGPPLIKEIVTHI</sequence>
<protein>
    <recommendedName>
        <fullName evidence="1">Dihydroorotate dehydrogenase (quinone)</fullName>
        <ecNumber evidence="1">1.3.5.2</ecNumber>
    </recommendedName>
    <alternativeName>
        <fullName evidence="1">DHOdehase</fullName>
        <shortName evidence="1">DHOD</shortName>
        <shortName evidence="1">DHODase</shortName>
    </alternativeName>
    <alternativeName>
        <fullName evidence="1">Dihydroorotate oxidase</fullName>
    </alternativeName>
</protein>
<gene>
    <name evidence="1" type="primary">pyrD</name>
    <name type="ordered locus">ECIAI39_2202</name>
</gene>
<proteinExistence type="inferred from homology"/>
<accession>B7NM29</accession>
<reference key="1">
    <citation type="journal article" date="2009" name="PLoS Genet.">
        <title>Organised genome dynamics in the Escherichia coli species results in highly diverse adaptive paths.</title>
        <authorList>
            <person name="Touchon M."/>
            <person name="Hoede C."/>
            <person name="Tenaillon O."/>
            <person name="Barbe V."/>
            <person name="Baeriswyl S."/>
            <person name="Bidet P."/>
            <person name="Bingen E."/>
            <person name="Bonacorsi S."/>
            <person name="Bouchier C."/>
            <person name="Bouvet O."/>
            <person name="Calteau A."/>
            <person name="Chiapello H."/>
            <person name="Clermont O."/>
            <person name="Cruveiller S."/>
            <person name="Danchin A."/>
            <person name="Diard M."/>
            <person name="Dossat C."/>
            <person name="Karoui M.E."/>
            <person name="Frapy E."/>
            <person name="Garry L."/>
            <person name="Ghigo J.M."/>
            <person name="Gilles A.M."/>
            <person name="Johnson J."/>
            <person name="Le Bouguenec C."/>
            <person name="Lescat M."/>
            <person name="Mangenot S."/>
            <person name="Martinez-Jehanne V."/>
            <person name="Matic I."/>
            <person name="Nassif X."/>
            <person name="Oztas S."/>
            <person name="Petit M.A."/>
            <person name="Pichon C."/>
            <person name="Rouy Z."/>
            <person name="Ruf C.S."/>
            <person name="Schneider D."/>
            <person name="Tourret J."/>
            <person name="Vacherie B."/>
            <person name="Vallenet D."/>
            <person name="Medigue C."/>
            <person name="Rocha E.P.C."/>
            <person name="Denamur E."/>
        </authorList>
    </citation>
    <scope>NUCLEOTIDE SEQUENCE [LARGE SCALE GENOMIC DNA]</scope>
    <source>
        <strain>IAI39 / ExPEC</strain>
    </source>
</reference>
<feature type="chain" id="PRO_1000195074" description="Dihydroorotate dehydrogenase (quinone)">
    <location>
        <begin position="1"/>
        <end position="336"/>
    </location>
</feature>
<feature type="active site" description="Nucleophile" evidence="1">
    <location>
        <position position="175"/>
    </location>
</feature>
<feature type="binding site" evidence="1">
    <location>
        <begin position="62"/>
        <end position="66"/>
    </location>
    <ligand>
        <name>FMN</name>
        <dbReference type="ChEBI" id="CHEBI:58210"/>
    </ligand>
</feature>
<feature type="binding site" evidence="1">
    <location>
        <position position="66"/>
    </location>
    <ligand>
        <name>substrate</name>
    </ligand>
</feature>
<feature type="binding site" evidence="1">
    <location>
        <position position="86"/>
    </location>
    <ligand>
        <name>FMN</name>
        <dbReference type="ChEBI" id="CHEBI:58210"/>
    </ligand>
</feature>
<feature type="binding site" evidence="1">
    <location>
        <begin position="111"/>
        <end position="115"/>
    </location>
    <ligand>
        <name>substrate</name>
    </ligand>
</feature>
<feature type="binding site" evidence="1">
    <location>
        <position position="139"/>
    </location>
    <ligand>
        <name>FMN</name>
        <dbReference type="ChEBI" id="CHEBI:58210"/>
    </ligand>
</feature>
<feature type="binding site" evidence="1">
    <location>
        <position position="172"/>
    </location>
    <ligand>
        <name>FMN</name>
        <dbReference type="ChEBI" id="CHEBI:58210"/>
    </ligand>
</feature>
<feature type="binding site" evidence="1">
    <location>
        <position position="172"/>
    </location>
    <ligand>
        <name>substrate</name>
    </ligand>
</feature>
<feature type="binding site" evidence="1">
    <location>
        <position position="177"/>
    </location>
    <ligand>
        <name>substrate</name>
    </ligand>
</feature>
<feature type="binding site" evidence="1">
    <location>
        <position position="217"/>
    </location>
    <ligand>
        <name>FMN</name>
        <dbReference type="ChEBI" id="CHEBI:58210"/>
    </ligand>
</feature>
<feature type="binding site" evidence="1">
    <location>
        <position position="245"/>
    </location>
    <ligand>
        <name>FMN</name>
        <dbReference type="ChEBI" id="CHEBI:58210"/>
    </ligand>
</feature>
<feature type="binding site" evidence="1">
    <location>
        <begin position="246"/>
        <end position="247"/>
    </location>
    <ligand>
        <name>substrate</name>
    </ligand>
</feature>
<feature type="binding site" evidence="1">
    <location>
        <position position="268"/>
    </location>
    <ligand>
        <name>FMN</name>
        <dbReference type="ChEBI" id="CHEBI:58210"/>
    </ligand>
</feature>
<feature type="binding site" evidence="1">
    <location>
        <position position="297"/>
    </location>
    <ligand>
        <name>FMN</name>
        <dbReference type="ChEBI" id="CHEBI:58210"/>
    </ligand>
</feature>
<feature type="binding site" evidence="1">
    <location>
        <begin position="318"/>
        <end position="319"/>
    </location>
    <ligand>
        <name>FMN</name>
        <dbReference type="ChEBI" id="CHEBI:58210"/>
    </ligand>
</feature>
<comment type="function">
    <text evidence="1">Catalyzes the conversion of dihydroorotate to orotate with quinone as electron acceptor.</text>
</comment>
<comment type="catalytic activity">
    <reaction evidence="1">
        <text>(S)-dihydroorotate + a quinone = orotate + a quinol</text>
        <dbReference type="Rhea" id="RHEA:30187"/>
        <dbReference type="ChEBI" id="CHEBI:24646"/>
        <dbReference type="ChEBI" id="CHEBI:30839"/>
        <dbReference type="ChEBI" id="CHEBI:30864"/>
        <dbReference type="ChEBI" id="CHEBI:132124"/>
        <dbReference type="EC" id="1.3.5.2"/>
    </reaction>
</comment>
<comment type="cofactor">
    <cofactor evidence="1">
        <name>FMN</name>
        <dbReference type="ChEBI" id="CHEBI:58210"/>
    </cofactor>
    <text evidence="1">Binds 1 FMN per subunit.</text>
</comment>
<comment type="pathway">
    <text evidence="1">Pyrimidine metabolism; UMP biosynthesis via de novo pathway; orotate from (S)-dihydroorotate (quinone route): step 1/1.</text>
</comment>
<comment type="subunit">
    <text evidence="1">Monomer.</text>
</comment>
<comment type="subcellular location">
    <subcellularLocation>
        <location evidence="1">Cell membrane</location>
        <topology evidence="1">Peripheral membrane protein</topology>
    </subcellularLocation>
</comment>
<comment type="similarity">
    <text evidence="1">Belongs to the dihydroorotate dehydrogenase family. Type 2 subfamily.</text>
</comment>
<dbReference type="EC" id="1.3.5.2" evidence="1"/>
<dbReference type="EMBL" id="CU928164">
    <property type="protein sequence ID" value="CAR18329.1"/>
    <property type="molecule type" value="Genomic_DNA"/>
</dbReference>
<dbReference type="RefSeq" id="WP_001305914.1">
    <property type="nucleotide sequence ID" value="NC_011750.1"/>
</dbReference>
<dbReference type="RefSeq" id="YP_002408165.1">
    <property type="nucleotide sequence ID" value="NC_011750.1"/>
</dbReference>
<dbReference type="SMR" id="B7NM29"/>
<dbReference type="STRING" id="585057.ECIAI39_2202"/>
<dbReference type="KEGG" id="ect:ECIAI39_2202"/>
<dbReference type="PATRIC" id="fig|585057.6.peg.2293"/>
<dbReference type="HOGENOM" id="CLU_013640_2_0_6"/>
<dbReference type="UniPathway" id="UPA00070">
    <property type="reaction ID" value="UER00946"/>
</dbReference>
<dbReference type="Proteomes" id="UP000000749">
    <property type="component" value="Chromosome"/>
</dbReference>
<dbReference type="GO" id="GO:0005737">
    <property type="term" value="C:cytoplasm"/>
    <property type="evidence" value="ECO:0007669"/>
    <property type="project" value="InterPro"/>
</dbReference>
<dbReference type="GO" id="GO:0005886">
    <property type="term" value="C:plasma membrane"/>
    <property type="evidence" value="ECO:0007669"/>
    <property type="project" value="UniProtKB-SubCell"/>
</dbReference>
<dbReference type="GO" id="GO:0106430">
    <property type="term" value="F:dihydroorotate dehydrogenase (quinone) activity"/>
    <property type="evidence" value="ECO:0007669"/>
    <property type="project" value="UniProtKB-EC"/>
</dbReference>
<dbReference type="GO" id="GO:0006207">
    <property type="term" value="P:'de novo' pyrimidine nucleobase biosynthetic process"/>
    <property type="evidence" value="ECO:0007669"/>
    <property type="project" value="InterPro"/>
</dbReference>
<dbReference type="GO" id="GO:0044205">
    <property type="term" value="P:'de novo' UMP biosynthetic process"/>
    <property type="evidence" value="ECO:0007669"/>
    <property type="project" value="UniProtKB-UniRule"/>
</dbReference>
<dbReference type="CDD" id="cd04738">
    <property type="entry name" value="DHOD_2_like"/>
    <property type="match status" value="1"/>
</dbReference>
<dbReference type="FunFam" id="3.20.20.70:FF:000028">
    <property type="entry name" value="Dihydroorotate dehydrogenase (quinone)"/>
    <property type="match status" value="1"/>
</dbReference>
<dbReference type="Gene3D" id="3.20.20.70">
    <property type="entry name" value="Aldolase class I"/>
    <property type="match status" value="1"/>
</dbReference>
<dbReference type="HAMAP" id="MF_00225">
    <property type="entry name" value="DHO_dh_type2"/>
    <property type="match status" value="1"/>
</dbReference>
<dbReference type="InterPro" id="IPR013785">
    <property type="entry name" value="Aldolase_TIM"/>
</dbReference>
<dbReference type="InterPro" id="IPR050074">
    <property type="entry name" value="DHO_dehydrogenase"/>
</dbReference>
<dbReference type="InterPro" id="IPR012135">
    <property type="entry name" value="Dihydroorotate_DH_1_2"/>
</dbReference>
<dbReference type="InterPro" id="IPR005719">
    <property type="entry name" value="Dihydroorotate_DH_2"/>
</dbReference>
<dbReference type="InterPro" id="IPR005720">
    <property type="entry name" value="Dihydroorotate_DH_cat"/>
</dbReference>
<dbReference type="InterPro" id="IPR001295">
    <property type="entry name" value="Dihydroorotate_DH_CS"/>
</dbReference>
<dbReference type="NCBIfam" id="NF003644">
    <property type="entry name" value="PRK05286.1-1"/>
    <property type="match status" value="1"/>
</dbReference>
<dbReference type="NCBIfam" id="NF003645">
    <property type="entry name" value="PRK05286.1-2"/>
    <property type="match status" value="1"/>
</dbReference>
<dbReference type="NCBIfam" id="NF003646">
    <property type="entry name" value="PRK05286.1-4"/>
    <property type="match status" value="1"/>
</dbReference>
<dbReference type="NCBIfam" id="NF003652">
    <property type="entry name" value="PRK05286.2-5"/>
    <property type="match status" value="1"/>
</dbReference>
<dbReference type="NCBIfam" id="TIGR01036">
    <property type="entry name" value="pyrD_sub2"/>
    <property type="match status" value="1"/>
</dbReference>
<dbReference type="PANTHER" id="PTHR48109:SF4">
    <property type="entry name" value="DIHYDROOROTATE DEHYDROGENASE (QUINONE), MITOCHONDRIAL"/>
    <property type="match status" value="1"/>
</dbReference>
<dbReference type="PANTHER" id="PTHR48109">
    <property type="entry name" value="DIHYDROOROTATE DEHYDROGENASE (QUINONE), MITOCHONDRIAL-RELATED"/>
    <property type="match status" value="1"/>
</dbReference>
<dbReference type="Pfam" id="PF01180">
    <property type="entry name" value="DHO_dh"/>
    <property type="match status" value="1"/>
</dbReference>
<dbReference type="PIRSF" id="PIRSF000164">
    <property type="entry name" value="DHO_oxidase"/>
    <property type="match status" value="1"/>
</dbReference>
<dbReference type="SUPFAM" id="SSF51395">
    <property type="entry name" value="FMN-linked oxidoreductases"/>
    <property type="match status" value="1"/>
</dbReference>
<dbReference type="PROSITE" id="PS00911">
    <property type="entry name" value="DHODEHASE_1"/>
    <property type="match status" value="1"/>
</dbReference>
<dbReference type="PROSITE" id="PS00912">
    <property type="entry name" value="DHODEHASE_2"/>
    <property type="match status" value="1"/>
</dbReference>
<keyword id="KW-1003">Cell membrane</keyword>
<keyword id="KW-0285">Flavoprotein</keyword>
<keyword id="KW-0288">FMN</keyword>
<keyword id="KW-0472">Membrane</keyword>
<keyword id="KW-0560">Oxidoreductase</keyword>
<keyword id="KW-0665">Pyrimidine biosynthesis</keyword>
<organism>
    <name type="scientific">Escherichia coli O7:K1 (strain IAI39 / ExPEC)</name>
    <dbReference type="NCBI Taxonomy" id="585057"/>
    <lineage>
        <taxon>Bacteria</taxon>
        <taxon>Pseudomonadati</taxon>
        <taxon>Pseudomonadota</taxon>
        <taxon>Gammaproteobacteria</taxon>
        <taxon>Enterobacterales</taxon>
        <taxon>Enterobacteriaceae</taxon>
        <taxon>Escherichia</taxon>
    </lineage>
</organism>
<evidence type="ECO:0000255" key="1">
    <source>
        <dbReference type="HAMAP-Rule" id="MF_00225"/>
    </source>
</evidence>